<organism evidence="17">
    <name type="scientific">Mus musculus</name>
    <name type="common">Mouse</name>
    <dbReference type="NCBI Taxonomy" id="10090"/>
    <lineage>
        <taxon>Eukaryota</taxon>
        <taxon>Metazoa</taxon>
        <taxon>Chordata</taxon>
        <taxon>Craniata</taxon>
        <taxon>Vertebrata</taxon>
        <taxon>Euteleostomi</taxon>
        <taxon>Mammalia</taxon>
        <taxon>Eutheria</taxon>
        <taxon>Euarchontoglires</taxon>
        <taxon>Glires</taxon>
        <taxon>Rodentia</taxon>
        <taxon>Myomorpha</taxon>
        <taxon>Muroidea</taxon>
        <taxon>Muridae</taxon>
        <taxon>Murinae</taxon>
        <taxon>Mus</taxon>
        <taxon>Mus</taxon>
    </lineage>
</organism>
<gene>
    <name type="primary">Dapk3</name>
    <name type="synonym">Zipk</name>
</gene>
<dbReference type="EC" id="2.7.11.1" evidence="7 8 13 14"/>
<dbReference type="EMBL" id="AB007143">
    <property type="protein sequence ID" value="BAA24954.1"/>
    <property type="molecule type" value="mRNA"/>
</dbReference>
<dbReference type="CCDS" id="CCDS24045.1"/>
<dbReference type="RefSeq" id="NP_001177402.1">
    <property type="nucleotide sequence ID" value="NM_001190473.2"/>
</dbReference>
<dbReference type="RefSeq" id="NP_001415380.1">
    <property type="nucleotide sequence ID" value="NM_001428451.1"/>
</dbReference>
<dbReference type="RefSeq" id="NP_031854.1">
    <property type="nucleotide sequence ID" value="NM_007828.3"/>
</dbReference>
<dbReference type="RefSeq" id="XP_006513258.1">
    <property type="nucleotide sequence ID" value="XM_006513195.2"/>
</dbReference>
<dbReference type="SMR" id="O54784"/>
<dbReference type="BioGRID" id="199052">
    <property type="interactions" value="8"/>
</dbReference>
<dbReference type="FunCoup" id="O54784">
    <property type="interactions" value="1554"/>
</dbReference>
<dbReference type="IntAct" id="O54784">
    <property type="interactions" value="11"/>
</dbReference>
<dbReference type="STRING" id="10090.ENSMUSP00000137333"/>
<dbReference type="GlyGen" id="O54784">
    <property type="glycosylation" value="1 site"/>
</dbReference>
<dbReference type="iPTMnet" id="O54784"/>
<dbReference type="PhosphoSitePlus" id="O54784"/>
<dbReference type="PaxDb" id="10090-ENSMUSP00000137333"/>
<dbReference type="PeptideAtlas" id="O54784"/>
<dbReference type="ProteomicsDB" id="279823"/>
<dbReference type="Pumba" id="O54784"/>
<dbReference type="Antibodypedia" id="11137">
    <property type="antibodies" value="418 antibodies from 43 providers"/>
</dbReference>
<dbReference type="DNASU" id="13144"/>
<dbReference type="Ensembl" id="ENSMUST00000047665.7">
    <property type="protein sequence ID" value="ENSMUSP00000035962.7"/>
    <property type="gene ID" value="ENSMUSG00000034974.14"/>
</dbReference>
<dbReference type="Ensembl" id="ENSMUST00000178422.9">
    <property type="protein sequence ID" value="ENSMUSP00000137333.2"/>
    <property type="gene ID" value="ENSMUSG00000034974.14"/>
</dbReference>
<dbReference type="Ensembl" id="ENSMUST00000219850.2">
    <property type="protein sequence ID" value="ENSMUSP00000151577.2"/>
    <property type="gene ID" value="ENSMUSG00000034974.14"/>
</dbReference>
<dbReference type="GeneID" id="13144"/>
<dbReference type="KEGG" id="mmu:13144"/>
<dbReference type="UCSC" id="uc007ggg.2">
    <property type="organism name" value="mouse"/>
</dbReference>
<dbReference type="AGR" id="MGI:1203520"/>
<dbReference type="CTD" id="1613"/>
<dbReference type="MGI" id="MGI:1203520">
    <property type="gene designation" value="Dapk3"/>
</dbReference>
<dbReference type="VEuPathDB" id="HostDB:ENSMUSG00000034974"/>
<dbReference type="eggNOG" id="KOG0032">
    <property type="taxonomic scope" value="Eukaryota"/>
</dbReference>
<dbReference type="GeneTree" id="ENSGT00940000161753"/>
<dbReference type="HOGENOM" id="CLU_000288_63_55_1"/>
<dbReference type="InParanoid" id="O54784"/>
<dbReference type="OMA" id="XARLKEY"/>
<dbReference type="OrthoDB" id="74764at2759"/>
<dbReference type="PhylomeDB" id="O54784"/>
<dbReference type="TreeFam" id="TF314166"/>
<dbReference type="BioGRID-ORCS" id="13144">
    <property type="hits" value="8 hits in 81 CRISPR screens"/>
</dbReference>
<dbReference type="ChiTaRS" id="Dapk3">
    <property type="organism name" value="mouse"/>
</dbReference>
<dbReference type="PRO" id="PR:O54784"/>
<dbReference type="Proteomes" id="UP000000589">
    <property type="component" value="Chromosome 10"/>
</dbReference>
<dbReference type="RNAct" id="O54784">
    <property type="molecule type" value="protein"/>
</dbReference>
<dbReference type="Bgee" id="ENSMUSG00000034974">
    <property type="expression patterns" value="Expressed in yolk sac and 217 other cell types or tissues"/>
</dbReference>
<dbReference type="ExpressionAtlas" id="O54784">
    <property type="expression patterns" value="baseline and differential"/>
</dbReference>
<dbReference type="GO" id="GO:0005813">
    <property type="term" value="C:centrosome"/>
    <property type="evidence" value="ECO:0007669"/>
    <property type="project" value="UniProtKB-SubCell"/>
</dbReference>
<dbReference type="GO" id="GO:0000775">
    <property type="term" value="C:chromosome, centromeric region"/>
    <property type="evidence" value="ECO:0000250"/>
    <property type="project" value="UniProtKB"/>
</dbReference>
<dbReference type="GO" id="GO:0005929">
    <property type="term" value="C:cilium"/>
    <property type="evidence" value="ECO:0007669"/>
    <property type="project" value="Ensembl"/>
</dbReference>
<dbReference type="GO" id="GO:0005829">
    <property type="term" value="C:cytosol"/>
    <property type="evidence" value="ECO:0007669"/>
    <property type="project" value="Ensembl"/>
</dbReference>
<dbReference type="GO" id="GO:0030496">
    <property type="term" value="C:midbody"/>
    <property type="evidence" value="ECO:0000250"/>
    <property type="project" value="UniProtKB"/>
</dbReference>
<dbReference type="GO" id="GO:0005634">
    <property type="term" value="C:nucleus"/>
    <property type="evidence" value="ECO:0000314"/>
    <property type="project" value="UniProtKB"/>
</dbReference>
<dbReference type="GO" id="GO:0016605">
    <property type="term" value="C:PML body"/>
    <property type="evidence" value="ECO:0000314"/>
    <property type="project" value="MGI"/>
</dbReference>
<dbReference type="GO" id="GO:0005819">
    <property type="term" value="C:spindle"/>
    <property type="evidence" value="ECO:0000250"/>
    <property type="project" value="UniProtKB"/>
</dbReference>
<dbReference type="GO" id="GO:0005524">
    <property type="term" value="F:ATP binding"/>
    <property type="evidence" value="ECO:0000314"/>
    <property type="project" value="UniProtKB"/>
</dbReference>
<dbReference type="GO" id="GO:0016301">
    <property type="term" value="F:kinase activity"/>
    <property type="evidence" value="ECO:0000266"/>
    <property type="project" value="MGI"/>
</dbReference>
<dbReference type="GO" id="GO:0043522">
    <property type="term" value="F:leucine zipper domain binding"/>
    <property type="evidence" value="ECO:0007669"/>
    <property type="project" value="Ensembl"/>
</dbReference>
<dbReference type="GO" id="GO:0042803">
    <property type="term" value="F:protein homodimerization activity"/>
    <property type="evidence" value="ECO:0000250"/>
    <property type="project" value="UniProtKB"/>
</dbReference>
<dbReference type="GO" id="GO:0106310">
    <property type="term" value="F:protein serine kinase activity"/>
    <property type="evidence" value="ECO:0007669"/>
    <property type="project" value="RHEA"/>
</dbReference>
<dbReference type="GO" id="GO:0004674">
    <property type="term" value="F:protein serine/threonine kinase activity"/>
    <property type="evidence" value="ECO:0000314"/>
    <property type="project" value="UniProtKB"/>
</dbReference>
<dbReference type="GO" id="GO:0031267">
    <property type="term" value="F:small GTPase binding"/>
    <property type="evidence" value="ECO:0007669"/>
    <property type="project" value="Ensembl"/>
</dbReference>
<dbReference type="GO" id="GO:0097190">
    <property type="term" value="P:apoptotic signaling pathway"/>
    <property type="evidence" value="ECO:0000314"/>
    <property type="project" value="MGI"/>
</dbReference>
<dbReference type="GO" id="GO:0071346">
    <property type="term" value="P:cellular response to type II interferon"/>
    <property type="evidence" value="ECO:0000315"/>
    <property type="project" value="UniProtKB"/>
</dbReference>
<dbReference type="GO" id="GO:0006325">
    <property type="term" value="P:chromatin organization"/>
    <property type="evidence" value="ECO:0007669"/>
    <property type="project" value="UniProtKB-KW"/>
</dbReference>
<dbReference type="GO" id="GO:0035556">
    <property type="term" value="P:intracellular signal transduction"/>
    <property type="evidence" value="ECO:0000314"/>
    <property type="project" value="UniProtKB"/>
</dbReference>
<dbReference type="GO" id="GO:0017148">
    <property type="term" value="P:negative regulation of translation"/>
    <property type="evidence" value="ECO:0007669"/>
    <property type="project" value="Ensembl"/>
</dbReference>
<dbReference type="GO" id="GO:0043065">
    <property type="term" value="P:positive regulation of apoptotic process"/>
    <property type="evidence" value="ECO:0007669"/>
    <property type="project" value="Ensembl"/>
</dbReference>
<dbReference type="GO" id="GO:0090263">
    <property type="term" value="P:positive regulation of canonical Wnt signaling pathway"/>
    <property type="evidence" value="ECO:0007669"/>
    <property type="project" value="Ensembl"/>
</dbReference>
<dbReference type="GO" id="GO:0030335">
    <property type="term" value="P:positive regulation of cell migration"/>
    <property type="evidence" value="ECO:0000315"/>
    <property type="project" value="UniProtKB"/>
</dbReference>
<dbReference type="GO" id="GO:0046777">
    <property type="term" value="P:protein autophosphorylation"/>
    <property type="evidence" value="ECO:0000250"/>
    <property type="project" value="UniProtKB"/>
</dbReference>
<dbReference type="GO" id="GO:0006468">
    <property type="term" value="P:protein phosphorylation"/>
    <property type="evidence" value="ECO:0000314"/>
    <property type="project" value="UniProtKB"/>
</dbReference>
<dbReference type="GO" id="GO:0008360">
    <property type="term" value="P:regulation of cell shape"/>
    <property type="evidence" value="ECO:0000315"/>
    <property type="project" value="UniProtKB"/>
</dbReference>
<dbReference type="GO" id="GO:0051893">
    <property type="term" value="P:regulation of focal adhesion assembly"/>
    <property type="evidence" value="ECO:0007669"/>
    <property type="project" value="Ensembl"/>
</dbReference>
<dbReference type="GO" id="GO:0007346">
    <property type="term" value="P:regulation of mitotic cell cycle"/>
    <property type="evidence" value="ECO:0007669"/>
    <property type="project" value="Ensembl"/>
</dbReference>
<dbReference type="GO" id="GO:0043519">
    <property type="term" value="P:regulation of myosin II filament organization"/>
    <property type="evidence" value="ECO:0000315"/>
    <property type="project" value="UniProtKB"/>
</dbReference>
<dbReference type="CDD" id="cd14105">
    <property type="entry name" value="STKc_DAPK"/>
    <property type="match status" value="1"/>
</dbReference>
<dbReference type="FunFam" id="3.30.200.20:FF:000110">
    <property type="entry name" value="Death-associated kinase 3, isoform CRA_a"/>
    <property type="match status" value="1"/>
</dbReference>
<dbReference type="FunFam" id="1.10.510.10:FF:000250">
    <property type="entry name" value="Death-associated protein kinase 3"/>
    <property type="match status" value="1"/>
</dbReference>
<dbReference type="Gene3D" id="3.30.200.20">
    <property type="entry name" value="Phosphorylase Kinase, domain 1"/>
    <property type="match status" value="1"/>
</dbReference>
<dbReference type="Gene3D" id="1.10.510.10">
    <property type="entry name" value="Transferase(Phosphotransferase) domain 1"/>
    <property type="match status" value="1"/>
</dbReference>
<dbReference type="InterPro" id="IPR042870">
    <property type="entry name" value="DAPK3_STKc"/>
</dbReference>
<dbReference type="InterPro" id="IPR011009">
    <property type="entry name" value="Kinase-like_dom_sf"/>
</dbReference>
<dbReference type="InterPro" id="IPR000719">
    <property type="entry name" value="Prot_kinase_dom"/>
</dbReference>
<dbReference type="InterPro" id="IPR017441">
    <property type="entry name" value="Protein_kinase_ATP_BS"/>
</dbReference>
<dbReference type="InterPro" id="IPR008271">
    <property type="entry name" value="Ser/Thr_kinase_AS"/>
</dbReference>
<dbReference type="PANTHER" id="PTHR24342:SF18">
    <property type="entry name" value="DEATH-ASSOCIATED PROTEIN KINASE 3"/>
    <property type="match status" value="1"/>
</dbReference>
<dbReference type="PANTHER" id="PTHR24342">
    <property type="entry name" value="SERINE/THREONINE-PROTEIN KINASE 17"/>
    <property type="match status" value="1"/>
</dbReference>
<dbReference type="Pfam" id="PF00069">
    <property type="entry name" value="Pkinase"/>
    <property type="match status" value="1"/>
</dbReference>
<dbReference type="SMART" id="SM00220">
    <property type="entry name" value="S_TKc"/>
    <property type="match status" value="1"/>
</dbReference>
<dbReference type="SUPFAM" id="SSF56112">
    <property type="entry name" value="Protein kinase-like (PK-like)"/>
    <property type="match status" value="1"/>
</dbReference>
<dbReference type="PROSITE" id="PS00107">
    <property type="entry name" value="PROTEIN_KINASE_ATP"/>
    <property type="match status" value="1"/>
</dbReference>
<dbReference type="PROSITE" id="PS50011">
    <property type="entry name" value="PROTEIN_KINASE_DOM"/>
    <property type="match status" value="1"/>
</dbReference>
<dbReference type="PROSITE" id="PS00108">
    <property type="entry name" value="PROTEIN_KINASE_ST"/>
    <property type="match status" value="1"/>
</dbReference>
<feature type="chain" id="PRO_0000085915" description="Death-associated protein kinase 3">
    <location>
        <begin position="1"/>
        <end position="448"/>
    </location>
</feature>
<feature type="domain" description="Protein kinase" evidence="4">
    <location>
        <begin position="13"/>
        <end position="275"/>
    </location>
</feature>
<feature type="region of interest" description="Activation segment" evidence="3">
    <location>
        <begin position="161"/>
        <end position="204"/>
    </location>
</feature>
<feature type="region of interest" description="Interaction with CDC5L" evidence="2">
    <location>
        <begin position="390"/>
        <end position="448"/>
    </location>
</feature>
<feature type="region of interest" description="Leucine-zipper" evidence="15">
    <location>
        <begin position="422"/>
        <end position="436"/>
    </location>
</feature>
<feature type="active site" description="Proton acceptor" evidence="4 5">
    <location>
        <position position="139"/>
    </location>
</feature>
<feature type="binding site" evidence="4">
    <location>
        <begin position="19"/>
        <end position="27"/>
    </location>
    <ligand>
        <name>ATP</name>
        <dbReference type="ChEBI" id="CHEBI:30616"/>
    </ligand>
</feature>
<feature type="binding site" evidence="16">
    <location>
        <position position="42"/>
    </location>
    <ligand>
        <name>ATP</name>
        <dbReference type="ChEBI" id="CHEBI:30616"/>
    </ligand>
</feature>
<feature type="modified residue" description="Phosphothreonine" evidence="1">
    <location>
        <position position="180"/>
    </location>
</feature>
<feature type="modified residue" description="Phosphothreonine" evidence="1">
    <location>
        <position position="225"/>
    </location>
</feature>
<feature type="modified residue" description="Phosphothreonine; by autocatalysis" evidence="9">
    <location>
        <position position="265"/>
    </location>
</feature>
<feature type="modified residue" description="Phosphothreonine; by ROCK1" evidence="1">
    <location>
        <position position="265"/>
    </location>
</feature>
<feature type="modified residue" description="Phosphoserine; by DAPK1" evidence="1">
    <location>
        <position position="304"/>
    </location>
</feature>
<feature type="modified residue" description="Phosphoserine; by autocatalysis and DAPK1" evidence="1">
    <location>
        <position position="306"/>
    </location>
</feature>
<feature type="modified residue" description="Phosphoserine; by DAPK1" evidence="1">
    <location>
        <position position="307"/>
    </location>
</feature>
<feature type="modified residue" description="Phosphoserine; by DAPK1" evidence="1">
    <location>
        <position position="313"/>
    </location>
</feature>
<feature type="modified residue" description="Phosphoserine; by DAPK1" evidence="1">
    <location>
        <position position="321"/>
    </location>
</feature>
<feature type="mutagenesis site" description="Loss of activity." evidence="14">
    <original>K</original>
    <variation>A</variation>
    <location>
        <position position="42"/>
    </location>
</feature>
<feature type="mutagenesis site" description="Nuclear localization." evidence="11">
    <original>RR</original>
    <variation>AA</variation>
    <location>
        <begin position="289"/>
        <end position="290"/>
    </location>
</feature>
<feature type="mutagenesis site" description="Nuclear colocalization." evidence="11">
    <original>A</original>
    <variation>D</variation>
    <location>
        <position position="294"/>
    </location>
</feature>
<feature type="mutagenesis site" description="Decreased activity; when associated with A-429 and A-436." evidence="14">
    <original>V</original>
    <variation>A</variation>
    <location>
        <position position="422"/>
    </location>
</feature>
<feature type="mutagenesis site" description="Decreased activity; when associated with A-422 and A-436." evidence="14">
    <original>V</original>
    <variation>A</variation>
    <location>
        <position position="429"/>
    </location>
</feature>
<feature type="mutagenesis site" description="Decreased activity; when associated with A-422 and A-429." evidence="14">
    <original>L</original>
    <variation>A</variation>
    <location>
        <position position="436"/>
    </location>
</feature>
<reference evidence="16" key="1">
    <citation type="journal article" date="1998" name="Mol. Cell. Biol.">
        <title>ZIP kinase, a novel serine/threonine kinase which mediates apoptosis.</title>
        <authorList>
            <person name="Kawai T."/>
            <person name="Matsumoto M."/>
            <person name="Takeda K."/>
            <person name="Sanjo H."/>
            <person name="Akira S."/>
        </authorList>
    </citation>
    <scope>NUCLEOTIDE SEQUENCE [MRNA]</scope>
    <scope>CATALYTIC ACTIVITY</scope>
    <scope>COFACTOR</scope>
    <scope>FUNCTION IN APOPTOSIS</scope>
    <scope>TISSUE SPECIFICITY</scope>
    <scope>INTERACTION WITH ATF4</scope>
    <scope>SUBCELLULAR LOCATION</scope>
    <scope>MUTAGENESIS OF LYS-42; VAL-422; VAL-429 AND LEU-436</scope>
</reference>
<reference evidence="16" key="2">
    <citation type="journal article" date="2003" name="Mol. Cell. Biol.">
        <title>ZIP kinase triggers apoptosis from nuclear PML oncogenic domains.</title>
        <authorList>
            <person name="Kawai T."/>
            <person name="Akira S."/>
            <person name="Reed J.C."/>
        </authorList>
    </citation>
    <scope>FUNCTION IN APOPTOSIS</scope>
    <scope>SUBCELLULAR LOCATION</scope>
    <scope>INTERACTION WITH DAXX AND PAWR</scope>
</reference>
<reference key="3">
    <citation type="journal article" date="2004" name="J. Cell Biol.">
        <title>ZIP kinase is responsible for the phosphorylation of myosin II and necessary for cell motility in mammalian fibroblasts.</title>
        <authorList>
            <person name="Komatsu S."/>
            <person name="Ikebe M."/>
        </authorList>
    </citation>
    <scope>FUNCTION IN PHOSPHORYLATION OF MYL12B</scope>
    <scope>CATALYTIC ACTIVITY</scope>
    <scope>FUNCTION IN CYTOSKELETON REORGANIZATION</scope>
</reference>
<reference key="4">
    <citation type="journal article" date="2005" name="Int. Immunol.">
        <title>Physical and functional interactions between STAT3 and ZIP kinase.</title>
        <authorList>
            <person name="Sato N."/>
            <person name="Kawai T."/>
            <person name="Sugiyama K."/>
            <person name="Muromoto R."/>
            <person name="Imoto S."/>
            <person name="Sekine Y."/>
            <person name="Ishida M."/>
            <person name="Akira S."/>
            <person name="Matsuda T."/>
        </authorList>
    </citation>
    <scope>FUNCTION IN PHOSPHORYLATION OF STAT3</scope>
    <scope>CATALYTIC ACTIVITY</scope>
    <scope>INTERACTION WITH STAT3</scope>
</reference>
<reference key="5">
    <citation type="journal article" date="2006" name="Immunol. Lett.">
        <title>Phosphorylation of threonine-265 in zipper-interacting protein kinase plays an important role in its activity and is induced by IL-6 family cytokines.</title>
        <authorList>
            <person name="Sato N."/>
            <person name="Kamada N."/>
            <person name="Muromoto R."/>
            <person name="Kawai T."/>
            <person name="Sugiyama K."/>
            <person name="Watanabe T."/>
            <person name="Imoto S."/>
            <person name="Sekine Y."/>
            <person name="Ohbayashi N."/>
            <person name="Ishida M."/>
            <person name="Akira S."/>
            <person name="Matsuda T."/>
        </authorList>
    </citation>
    <scope>PHOSPHORYLATION AT THR-265</scope>
</reference>
<reference key="6">
    <citation type="journal article" date="2008" name="Biochem. Biophys. Res. Commun.">
        <title>Physical and functional interactions between ZIP kinase and UbcH5.</title>
        <authorList>
            <person name="Ohbayashi N."/>
            <person name="Okada K."/>
            <person name="Kawakami S."/>
            <person name="Togi S."/>
            <person name="Sato N."/>
            <person name="Ikeda O."/>
            <person name="Kamitani S."/>
            <person name="Muromoto R."/>
            <person name="Sekine Y."/>
            <person name="Kawai T."/>
            <person name="Akira S."/>
            <person name="Matsuda T."/>
        </authorList>
    </citation>
    <scope>INTERACTION WITH UBE2D1; UBE2D2 AND UBE2D3</scope>
    <scope>UBIQUITINATION</scope>
    <scope>SUBCELLULAR LOCATION</scope>
</reference>
<reference key="7">
    <citation type="journal article" date="2011" name="Cell. Signal.">
        <title>Phosphorylation-dependent control of ZIPK nuclear import is species specific.</title>
        <authorList>
            <person name="Weitzel D.H."/>
            <person name="Chambers J."/>
            <person name="Haystead T.A."/>
        </authorList>
    </citation>
    <scope>SUBCELLULAR LOCATION</scope>
    <scope>MUTAGENESIS OF 289-ARG-ARG-290 AND ALA-294</scope>
</reference>
<reference key="8">
    <citation type="journal article" date="2011" name="J. Biol. Chem.">
        <title>Zipper-interacting protein kinase (ZIPK) modulates canonical Wnt/beta-catenin signaling through interaction with Nemo-like kinase and T-cell factor 4 (NLK/TCF4).</title>
        <authorList>
            <person name="Togi S."/>
            <person name="Ikeda O."/>
            <person name="Kamitani S."/>
            <person name="Nakasuji M."/>
            <person name="Sekine Y."/>
            <person name="Muromoto R."/>
            <person name="Nanbo A."/>
            <person name="Oritani K."/>
            <person name="Kawai T."/>
            <person name="Akira S."/>
            <person name="Matsuda T."/>
        </authorList>
    </citation>
    <scope>FUNCTION</scope>
    <scope>INTERACTION WITH NLK AND TCF7L2</scope>
</reference>
<reference key="9">
    <citation type="journal article" date="2012" name="Mol. Cell. Biol.">
        <title>Heterotrimeric GAIT complex drives transcript-selective translation inhibition in murine macrophages.</title>
        <authorList>
            <person name="Arif A."/>
            <person name="Chatterjee P."/>
            <person name="Moodt R.A."/>
            <person name="Fox P.L."/>
        </authorList>
    </citation>
    <scope>FUNCTION IN PHOSPHORYLATION OF RPL13A</scope>
    <scope>CATALYTIC ACTIVITY</scope>
</reference>
<protein>
    <recommendedName>
        <fullName>Death-associated protein kinase 3</fullName>
        <shortName>DAP kinase 3</shortName>
        <ecNumber evidence="7 8 13 14">2.7.11.1</ecNumber>
    </recommendedName>
    <alternativeName>
        <fullName>DAP-like kinase</fullName>
        <shortName>Dlk</shortName>
    </alternativeName>
    <alternativeName>
        <fullName>MYPT1 kinase</fullName>
    </alternativeName>
    <alternativeName>
        <fullName>ZIP-kinase</fullName>
    </alternativeName>
</protein>
<name>DAPK3_MOUSE</name>
<keyword id="KW-0010">Activator</keyword>
<keyword id="KW-0053">Apoptosis</keyword>
<keyword id="KW-0067">ATP-binding</keyword>
<keyword id="KW-0137">Centromere</keyword>
<keyword id="KW-0156">Chromatin regulator</keyword>
<keyword id="KW-0158">Chromosome</keyword>
<keyword id="KW-0963">Cytoplasm</keyword>
<keyword id="KW-0206">Cytoskeleton</keyword>
<keyword id="KW-0418">Kinase</keyword>
<keyword id="KW-0547">Nucleotide-binding</keyword>
<keyword id="KW-0539">Nucleus</keyword>
<keyword id="KW-0597">Phosphoprotein</keyword>
<keyword id="KW-1185">Reference proteome</keyword>
<keyword id="KW-0723">Serine/threonine-protein kinase</keyword>
<keyword id="KW-0804">Transcription</keyword>
<keyword id="KW-0805">Transcription regulation</keyword>
<keyword id="KW-0808">Transferase</keyword>
<keyword id="KW-0832">Ubl conjugation</keyword>
<evidence type="ECO:0000250" key="1">
    <source>
        <dbReference type="UniProtKB" id="O43293"/>
    </source>
</evidence>
<evidence type="ECO:0000250" key="2">
    <source>
        <dbReference type="UniProtKB" id="O88764"/>
    </source>
</evidence>
<evidence type="ECO:0000250" key="3">
    <source>
        <dbReference type="UniProtKB" id="O96017"/>
    </source>
</evidence>
<evidence type="ECO:0000255" key="4">
    <source>
        <dbReference type="PROSITE-ProRule" id="PRU00159"/>
    </source>
</evidence>
<evidence type="ECO:0000255" key="5">
    <source>
        <dbReference type="PROSITE-ProRule" id="PRU10027"/>
    </source>
</evidence>
<evidence type="ECO:0000269" key="6">
    <source>
    </source>
</evidence>
<evidence type="ECO:0000269" key="7">
    <source>
    </source>
</evidence>
<evidence type="ECO:0000269" key="8">
    <source>
    </source>
</evidence>
<evidence type="ECO:0000269" key="9">
    <source>
    </source>
</evidence>
<evidence type="ECO:0000269" key="10">
    <source>
    </source>
</evidence>
<evidence type="ECO:0000269" key="11">
    <source>
    </source>
</evidence>
<evidence type="ECO:0000269" key="12">
    <source>
    </source>
</evidence>
<evidence type="ECO:0000269" key="13">
    <source>
    </source>
</evidence>
<evidence type="ECO:0000269" key="14">
    <source>
    </source>
</evidence>
<evidence type="ECO:0000303" key="15">
    <source>
    </source>
</evidence>
<evidence type="ECO:0000305" key="16"/>
<evidence type="ECO:0000312" key="17">
    <source>
        <dbReference type="EMBL" id="BAA24954.1"/>
    </source>
</evidence>
<comment type="function">
    <text evidence="2 6 7 8 12 13 14">Serine/threonine kinase which is involved in the regulation of apoptosis, autophagy, transcription, translation and actin cytoskeleton reorganization. Regulates both type I (caspase-dependent) apoptotic and type II (caspase-independent) autophagic cell deaths signal, depending on the cellular setting. Involved in formation of promyelocytic leukemia protein nuclear body (PML-NB). Involved in apoptosis involving PAWR which mediates cytoplasmic relocation; in vitro phosphorylates PAWR (By similarity). Regulates myosin phosphorylation in both smooth muscle and non-muscle cells. In smooth muscle, regulates myosin either directly by phosphorylating MYL12B and MYL9 or through inhibition of smooth muscle myosin phosphatase (SMPP1M) via phosphorylation of PPP1R12A; the inhibition of SMPP1M functions to enhance muscle responsiveness to Ca(2+) and promote a contractile state. Phosphorylates MYL12B in non-muscle cells leading to reorganization of actin cytoskeleton such as in regulation of cell polarity and cell migration. Positively regulates canonical Wnt/beta-catenin signaling through interaction with NLK and TCF7L2; disrupts the NLK-TCF7L2 complex thereby influencing the phosphorylation of TCF7L2 by NLK. Phosphorylates STAT3 and enhances its transcriptional activity. Enhances transcription from AR-responsive promoters in a hormone- and kinase-dependent manner. Phosphorylates histone H3 on 'Thr-11' at centromeres during mitosis (By similarity). Phosphorylates RPL13A on 'Ser-77' upon interferon-gamma activation which is causing RPL13A release from the ribosome, RPL13A association with the GAIT complex and its subsequent involvement in transcript-selective translation inhibition.</text>
</comment>
<comment type="catalytic activity">
    <reaction evidence="7 8 13 14">
        <text>L-seryl-[protein] + ATP = O-phospho-L-seryl-[protein] + ADP + H(+)</text>
        <dbReference type="Rhea" id="RHEA:17989"/>
        <dbReference type="Rhea" id="RHEA-COMP:9863"/>
        <dbReference type="Rhea" id="RHEA-COMP:11604"/>
        <dbReference type="ChEBI" id="CHEBI:15378"/>
        <dbReference type="ChEBI" id="CHEBI:29999"/>
        <dbReference type="ChEBI" id="CHEBI:30616"/>
        <dbReference type="ChEBI" id="CHEBI:83421"/>
        <dbReference type="ChEBI" id="CHEBI:456216"/>
        <dbReference type="EC" id="2.7.11.1"/>
    </reaction>
</comment>
<comment type="catalytic activity">
    <reaction evidence="7 8 13 14">
        <text>L-threonyl-[protein] + ATP = O-phospho-L-threonyl-[protein] + ADP + H(+)</text>
        <dbReference type="Rhea" id="RHEA:46608"/>
        <dbReference type="Rhea" id="RHEA-COMP:11060"/>
        <dbReference type="Rhea" id="RHEA-COMP:11605"/>
        <dbReference type="ChEBI" id="CHEBI:15378"/>
        <dbReference type="ChEBI" id="CHEBI:30013"/>
        <dbReference type="ChEBI" id="CHEBI:30616"/>
        <dbReference type="ChEBI" id="CHEBI:61977"/>
        <dbReference type="ChEBI" id="CHEBI:456216"/>
        <dbReference type="EC" id="2.7.11.1"/>
    </reaction>
</comment>
<comment type="cofactor">
    <cofactor evidence="14">
        <name>Mg(2+)</name>
        <dbReference type="ChEBI" id="CHEBI:18420"/>
    </cofactor>
</comment>
<comment type="activity regulation">
    <text evidence="1">A sequential activation is proposed: autophosphorylation at consensus sites is leading to dimerization of the catalytic domain and activation segment exchange (producing an active confirmation of both kinase modules in trans) followed by phosphorylation at Thr-180 in the activation segment and at other regulatory sites (Probable). Phosphorylation at Thr-180, Thr-225 and Thr-265 is essential for activity. Inhibited by pyridone 6 (K00225), a potent, ATP-competitive inhibitor. Phosphorylation at Thr-180, Thr-225 and Thr-265 is essential for activity.</text>
</comment>
<comment type="subunit">
    <text evidence="1 6 8 10 12 14">Homooligomer in its kinase-active form (homotrimers and homodimers are reported); monomeric in its kinase-inactive form. Homodimerization is required for activation segment autophosphorylation (By similarity). Interacts with DAXX, PAWR, ATF4, NLK, TCF7L2, UBE2D1, UBE2D2, UBE2D3, and CDC5L. Interacts with AR; enhanced by AATF. Interacts with LUZP1; the interaction is likely to occur throughout the cell cycle and reduces the LUZP1-mediated suppression of MYL9 phosphorylation (By similarity).</text>
</comment>
<comment type="interaction">
    <interactant intactId="EBI-77359">
        <id>O54784</id>
    </interactant>
    <interactant intactId="EBI-77383">
        <id>Q06507</id>
        <label>Atf4</label>
    </interactant>
    <organismsDiffer>false</organismsDiffer>
    <experiments>3</experiments>
</comment>
<comment type="interaction">
    <interactant intactId="EBI-77359">
        <id>O54784</id>
    </interactant>
    <interactant intactId="EBI-77304">
        <id>O35613</id>
        <label>Daxx</label>
    </interactant>
    <organismsDiffer>false</organismsDiffer>
    <experiments>2</experiments>
</comment>
<comment type="interaction">
    <interactant intactId="EBI-77359">
        <id>O54784</id>
    </interactant>
    <interactant intactId="EBI-77397">
        <id>Q925B0</id>
        <label>Pawr</label>
    </interactant>
    <organismsDiffer>false</organismsDiffer>
    <experiments>2</experiments>
</comment>
<comment type="interaction">
    <interactant intactId="EBI-77359">
        <id>O54784</id>
    </interactant>
    <interactant intactId="EBI-602878">
        <id>P42227</id>
        <label>Stat3</label>
    </interactant>
    <organismsDiffer>false</organismsDiffer>
    <experiments>8</experiments>
</comment>
<comment type="interaction">
    <interactant intactId="EBI-77359">
        <id>O54784</id>
    </interactant>
    <interactant intactId="EBI-492498">
        <id>P18848</id>
        <label>ATF4</label>
    </interactant>
    <organismsDiffer>true</organismsDiffer>
    <experiments>2</experiments>
</comment>
<comment type="interaction">
    <interactant intactId="EBI-77359">
        <id>O54784</id>
    </interactant>
    <interactant intactId="EBI-348268">
        <id>P61077</id>
        <label>UBE2D3</label>
    </interactant>
    <organismsDiffer>true</organismsDiffer>
    <experiments>2</experiments>
</comment>
<comment type="subcellular location">
    <subcellularLocation>
        <location evidence="10 11 14">Nucleus</location>
    </subcellularLocation>
    <subcellularLocation>
        <location evidence="6">Nucleus</location>
        <location evidence="6">PML body</location>
    </subcellularLocation>
    <subcellularLocation>
        <location evidence="2">Cytoplasm</location>
        <location evidence="2">Cytoskeleton</location>
        <location evidence="2">Microtubule organizing center</location>
        <location evidence="2">Centrosome</location>
    </subcellularLocation>
    <subcellularLocation>
        <location evidence="2">Chromosome</location>
        <location evidence="2">Centromere</location>
    </subcellularLocation>
    <subcellularLocation>
        <location evidence="2">Cytoplasm</location>
    </subcellularLocation>
    <subcellularLocation>
        <location evidence="1">Cytoplasm</location>
        <location evidence="1">Cytoskeleton</location>
        <location evidence="1">Spindle</location>
    </subcellularLocation>
    <subcellularLocation>
        <location evidence="1">Midbody</location>
    </subcellularLocation>
    <text evidence="2">Predominantly localized to the nucleus. Relocates to the cytoplasm on binding PAWR where the complex appears to interact with actin filaments. Associated with the centrosomes throughout the mitotic cell cycle, with the centromeres from prophase to anaphase and with the contractile ring during cytokinesis (By similarity).</text>
</comment>
<comment type="tissue specificity">
    <text evidence="14">Highly expressed in heart, brain, lung, skeletal muscle, kidney and testis. Lower levels in liver and spleen.</text>
</comment>
<comment type="PTM">
    <text evidence="10">Ubiquitinated. Ubiquitination mediated by the UBE2D3 E3 ligase does not lead to proteasomal degradation, but influences promyelocytic leukemia protein nuclear bodies (PML-NBs) formation in the nucleus.</text>
</comment>
<comment type="PTM">
    <text evidence="1">The phosphorylation status is critical for kinase activity, oligomerization and intracellular localization. Phosphorylation at Thr-180, Thr-225 and Thr-265 is essential for activity. The phosphorylated form is localized in the cytoplasm and nuclear translocation or retention is maximal when it is not phosphorylated. Phosphorylation increases the trimeric form, and its dephosphorylation favors a kinase-inactive monomeric form.</text>
</comment>
<comment type="miscellaneous">
    <text evidence="2">A species-specific loss of a key phosphorylation site in murine DAPK3 seems to direct it mainly to the nucleus which is proposed to be compensated by the interaction with PAWR to maintain at least the cytoplasmic basic membrane blebbing function in the apoptosis pathway.</text>
</comment>
<comment type="similarity">
    <text evidence="16">Belongs to the protein kinase superfamily. CAMK Ser/Thr protein kinase family. DAP kinase subfamily.</text>
</comment>
<accession>O54784</accession>
<proteinExistence type="evidence at protein level"/>
<sequence length="448" mass="51422">MSTFRQEDVEDHYEMGEELGSGQFAIVRKCQQKGTGMEYAAKFIKKRRLPSSRRGVSREEIEREVSILREIRHPNIITLHDVFENKTDVVLILELVSGGELFDFLAEKESLTEDEATQFLKQILDGVHYLHSKRIAHFDLKPENIMLLDKHAASPRIKLIDFGIAHRIEAGSEFKNIFGTPEFVAPEIVNYEPLGLEADMWSIGVITYILLSGASPFLGETKQETLTNISAVNYDFDEEYFSSTSELAKDFIRRLLVKDPKRRMTIAQSLEHSWIKVRRREDGARKPERRRLRAARLREYSLKSHSSMPRNTSYASFERFSRVLEDVAAAEQGLRELQRGRRQCRERVCALRAAAEQREARCRDGSAGLGRDLRRLRTELGRTEALRTRAQEEARAALLGAGGLKRRLCRLENRYDALAAQVAAEVQFVRDLVRALEQERLQAECGVR</sequence>